<protein>
    <recommendedName>
        <fullName evidence="1">Small ribosomal subunit protein uS14</fullName>
    </recommendedName>
    <alternativeName>
        <fullName evidence="2">30S ribosomal protein S14 type Z</fullName>
    </alternativeName>
</protein>
<comment type="function">
    <text evidence="1">Binds 16S rRNA, required for the assembly of 30S particles and may also be responsible for determining the conformation of the 16S rRNA at the A site.</text>
</comment>
<comment type="cofactor">
    <cofactor evidence="1">
        <name>Zn(2+)</name>
        <dbReference type="ChEBI" id="CHEBI:29105"/>
    </cofactor>
    <text evidence="1">Binds 1 zinc ion per subunit.</text>
</comment>
<comment type="subunit">
    <text evidence="1">Part of the 30S ribosomal subunit. Contacts proteins S3 and S10.</text>
</comment>
<comment type="similarity">
    <text evidence="1">Belongs to the universal ribosomal protein uS14 family. Zinc-binding uS14 subfamily.</text>
</comment>
<gene>
    <name evidence="1" type="primary">rpsZ</name>
    <name evidence="1" type="synonym">rpsN</name>
    <name type="ordered locus">MAV_4452</name>
</gene>
<organism>
    <name type="scientific">Mycobacterium avium (strain 104)</name>
    <dbReference type="NCBI Taxonomy" id="243243"/>
    <lineage>
        <taxon>Bacteria</taxon>
        <taxon>Bacillati</taxon>
        <taxon>Actinomycetota</taxon>
        <taxon>Actinomycetes</taxon>
        <taxon>Mycobacteriales</taxon>
        <taxon>Mycobacteriaceae</taxon>
        <taxon>Mycobacterium</taxon>
        <taxon>Mycobacterium avium complex (MAC)</taxon>
    </lineage>
</organism>
<proteinExistence type="inferred from homology"/>
<accession>A0QKZ9</accession>
<name>RS14Z_MYCA1</name>
<reference key="1">
    <citation type="submission" date="2006-10" db="EMBL/GenBank/DDBJ databases">
        <authorList>
            <person name="Fleischmann R.D."/>
            <person name="Dodson R.J."/>
            <person name="Haft D.H."/>
            <person name="Merkel J.S."/>
            <person name="Nelson W.C."/>
            <person name="Fraser C.M."/>
        </authorList>
    </citation>
    <scope>NUCLEOTIDE SEQUENCE [LARGE SCALE GENOMIC DNA]</scope>
    <source>
        <strain>104</strain>
    </source>
</reference>
<keyword id="KW-0479">Metal-binding</keyword>
<keyword id="KW-0687">Ribonucleoprotein</keyword>
<keyword id="KW-0689">Ribosomal protein</keyword>
<keyword id="KW-0694">RNA-binding</keyword>
<keyword id="KW-0699">rRNA-binding</keyword>
<keyword id="KW-0862">Zinc</keyword>
<feature type="chain" id="PRO_1000067951" description="Small ribosomal subunit protein uS14">
    <location>
        <begin position="1"/>
        <end position="61"/>
    </location>
</feature>
<feature type="binding site" evidence="1">
    <location>
        <position position="24"/>
    </location>
    <ligand>
        <name>Zn(2+)</name>
        <dbReference type="ChEBI" id="CHEBI:29105"/>
    </ligand>
</feature>
<feature type="binding site" evidence="1">
    <location>
        <position position="27"/>
    </location>
    <ligand>
        <name>Zn(2+)</name>
        <dbReference type="ChEBI" id="CHEBI:29105"/>
    </ligand>
</feature>
<feature type="binding site" evidence="1">
    <location>
        <position position="40"/>
    </location>
    <ligand>
        <name>Zn(2+)</name>
        <dbReference type="ChEBI" id="CHEBI:29105"/>
    </ligand>
</feature>
<feature type="binding site" evidence="1">
    <location>
        <position position="43"/>
    </location>
    <ligand>
        <name>Zn(2+)</name>
        <dbReference type="ChEBI" id="CHEBI:29105"/>
    </ligand>
</feature>
<dbReference type="EMBL" id="CP000479">
    <property type="protein sequence ID" value="ABK65459.1"/>
    <property type="molecule type" value="Genomic_DNA"/>
</dbReference>
<dbReference type="RefSeq" id="WP_003873499.1">
    <property type="nucleotide sequence ID" value="NC_008595.1"/>
</dbReference>
<dbReference type="SMR" id="A0QKZ9"/>
<dbReference type="KEGG" id="mav:MAV_4452"/>
<dbReference type="HOGENOM" id="CLU_139869_3_0_11"/>
<dbReference type="Proteomes" id="UP000001574">
    <property type="component" value="Chromosome"/>
</dbReference>
<dbReference type="GO" id="GO:0005737">
    <property type="term" value="C:cytoplasm"/>
    <property type="evidence" value="ECO:0007669"/>
    <property type="project" value="UniProtKB-ARBA"/>
</dbReference>
<dbReference type="GO" id="GO:0015935">
    <property type="term" value="C:small ribosomal subunit"/>
    <property type="evidence" value="ECO:0007669"/>
    <property type="project" value="TreeGrafter"/>
</dbReference>
<dbReference type="GO" id="GO:0019843">
    <property type="term" value="F:rRNA binding"/>
    <property type="evidence" value="ECO:0007669"/>
    <property type="project" value="UniProtKB-UniRule"/>
</dbReference>
<dbReference type="GO" id="GO:0003735">
    <property type="term" value="F:structural constituent of ribosome"/>
    <property type="evidence" value="ECO:0007669"/>
    <property type="project" value="InterPro"/>
</dbReference>
<dbReference type="GO" id="GO:0008270">
    <property type="term" value="F:zinc ion binding"/>
    <property type="evidence" value="ECO:0007669"/>
    <property type="project" value="UniProtKB-UniRule"/>
</dbReference>
<dbReference type="GO" id="GO:0006412">
    <property type="term" value="P:translation"/>
    <property type="evidence" value="ECO:0007669"/>
    <property type="project" value="UniProtKB-UniRule"/>
</dbReference>
<dbReference type="FunFam" id="4.10.830.10:FF:000001">
    <property type="entry name" value="30S ribosomal protein S14 type Z"/>
    <property type="match status" value="1"/>
</dbReference>
<dbReference type="Gene3D" id="4.10.830.10">
    <property type="entry name" value="30s Ribosomal Protein S14, Chain N"/>
    <property type="match status" value="1"/>
</dbReference>
<dbReference type="HAMAP" id="MF_01364_B">
    <property type="entry name" value="Ribosomal_uS14_2_B"/>
    <property type="match status" value="1"/>
</dbReference>
<dbReference type="InterPro" id="IPR001209">
    <property type="entry name" value="Ribosomal_uS14"/>
</dbReference>
<dbReference type="InterPro" id="IPR023053">
    <property type="entry name" value="Ribosomal_uS14_bact"/>
</dbReference>
<dbReference type="InterPro" id="IPR018271">
    <property type="entry name" value="Ribosomal_uS14_CS"/>
</dbReference>
<dbReference type="InterPro" id="IPR043140">
    <property type="entry name" value="Ribosomal_uS14_sf"/>
</dbReference>
<dbReference type="NCBIfam" id="NF005974">
    <property type="entry name" value="PRK08061.1"/>
    <property type="match status" value="1"/>
</dbReference>
<dbReference type="PANTHER" id="PTHR19836">
    <property type="entry name" value="30S RIBOSOMAL PROTEIN S14"/>
    <property type="match status" value="1"/>
</dbReference>
<dbReference type="PANTHER" id="PTHR19836:SF19">
    <property type="entry name" value="SMALL RIBOSOMAL SUBUNIT PROTEIN US14M"/>
    <property type="match status" value="1"/>
</dbReference>
<dbReference type="Pfam" id="PF00253">
    <property type="entry name" value="Ribosomal_S14"/>
    <property type="match status" value="1"/>
</dbReference>
<dbReference type="SUPFAM" id="SSF57716">
    <property type="entry name" value="Glucocorticoid receptor-like (DNA-binding domain)"/>
    <property type="match status" value="1"/>
</dbReference>
<dbReference type="PROSITE" id="PS00527">
    <property type="entry name" value="RIBOSOMAL_S14"/>
    <property type="match status" value="1"/>
</dbReference>
<sequence>MAKKALVNKAARKPKFAVRGYTRCNKCGRPRAVFRKFGLCRICLREMAHAGELPGVQKSSW</sequence>
<evidence type="ECO:0000255" key="1">
    <source>
        <dbReference type="HAMAP-Rule" id="MF_01364"/>
    </source>
</evidence>
<evidence type="ECO:0000305" key="2"/>